<protein>
    <recommendedName>
        <fullName>Cytochrome b</fullName>
    </recommendedName>
    <alternativeName>
        <fullName>Complex III subunit 3</fullName>
    </alternativeName>
    <alternativeName>
        <fullName>Complex III subunit III</fullName>
    </alternativeName>
    <alternativeName>
        <fullName>Cytochrome b-c1 complex subunit 3</fullName>
    </alternativeName>
    <alternativeName>
        <fullName>Ubiquinol-cytochrome-c reductase complex cytochrome b subunit</fullName>
    </alternativeName>
</protein>
<name>CYB_MYOBE</name>
<keyword id="KW-0249">Electron transport</keyword>
<keyword id="KW-0349">Heme</keyword>
<keyword id="KW-0408">Iron</keyword>
<keyword id="KW-0472">Membrane</keyword>
<keyword id="KW-0479">Metal-binding</keyword>
<keyword id="KW-0496">Mitochondrion</keyword>
<keyword id="KW-0999">Mitochondrion inner membrane</keyword>
<keyword id="KW-0679">Respiratory chain</keyword>
<keyword id="KW-0812">Transmembrane</keyword>
<keyword id="KW-1133">Transmembrane helix</keyword>
<keyword id="KW-0813">Transport</keyword>
<keyword id="KW-0830">Ubiquinone</keyword>
<feature type="chain" id="PRO_0000061230" description="Cytochrome b">
    <location>
        <begin position="1"/>
        <end position="379"/>
    </location>
</feature>
<feature type="transmembrane region" description="Helical" evidence="2">
    <location>
        <begin position="33"/>
        <end position="53"/>
    </location>
</feature>
<feature type="transmembrane region" description="Helical" evidence="2">
    <location>
        <begin position="77"/>
        <end position="98"/>
    </location>
</feature>
<feature type="transmembrane region" description="Helical" evidence="2">
    <location>
        <begin position="113"/>
        <end position="133"/>
    </location>
</feature>
<feature type="transmembrane region" description="Helical" evidence="2">
    <location>
        <begin position="178"/>
        <end position="198"/>
    </location>
</feature>
<feature type="transmembrane region" description="Helical" evidence="2">
    <location>
        <begin position="226"/>
        <end position="246"/>
    </location>
</feature>
<feature type="transmembrane region" description="Helical" evidence="2">
    <location>
        <begin position="288"/>
        <end position="308"/>
    </location>
</feature>
<feature type="transmembrane region" description="Helical" evidence="2">
    <location>
        <begin position="320"/>
        <end position="340"/>
    </location>
</feature>
<feature type="transmembrane region" description="Helical" evidence="2">
    <location>
        <begin position="347"/>
        <end position="367"/>
    </location>
</feature>
<feature type="binding site" description="axial binding residue" evidence="2">
    <location>
        <position position="83"/>
    </location>
    <ligand>
        <name>heme b</name>
        <dbReference type="ChEBI" id="CHEBI:60344"/>
        <label>b562</label>
    </ligand>
    <ligandPart>
        <name>Fe</name>
        <dbReference type="ChEBI" id="CHEBI:18248"/>
    </ligandPart>
</feature>
<feature type="binding site" description="axial binding residue" evidence="2">
    <location>
        <position position="97"/>
    </location>
    <ligand>
        <name>heme b</name>
        <dbReference type="ChEBI" id="CHEBI:60344"/>
        <label>b566</label>
    </ligand>
    <ligandPart>
        <name>Fe</name>
        <dbReference type="ChEBI" id="CHEBI:18248"/>
    </ligandPart>
</feature>
<feature type="binding site" description="axial binding residue" evidence="2">
    <location>
        <position position="182"/>
    </location>
    <ligand>
        <name>heme b</name>
        <dbReference type="ChEBI" id="CHEBI:60344"/>
        <label>b562</label>
    </ligand>
    <ligandPart>
        <name>Fe</name>
        <dbReference type="ChEBI" id="CHEBI:18248"/>
    </ligandPart>
</feature>
<feature type="binding site" description="axial binding residue" evidence="2">
    <location>
        <position position="196"/>
    </location>
    <ligand>
        <name>heme b</name>
        <dbReference type="ChEBI" id="CHEBI:60344"/>
        <label>b566</label>
    </ligand>
    <ligandPart>
        <name>Fe</name>
        <dbReference type="ChEBI" id="CHEBI:18248"/>
    </ligandPart>
</feature>
<feature type="binding site" evidence="2">
    <location>
        <position position="201"/>
    </location>
    <ligand>
        <name>a ubiquinone</name>
        <dbReference type="ChEBI" id="CHEBI:16389"/>
    </ligand>
</feature>
<evidence type="ECO:0000250" key="1"/>
<evidence type="ECO:0000250" key="2">
    <source>
        <dbReference type="UniProtKB" id="P00157"/>
    </source>
</evidence>
<evidence type="ECO:0000255" key="3">
    <source>
        <dbReference type="PROSITE-ProRule" id="PRU00967"/>
    </source>
</evidence>
<evidence type="ECO:0000255" key="4">
    <source>
        <dbReference type="PROSITE-ProRule" id="PRU00968"/>
    </source>
</evidence>
<reference key="1">
    <citation type="journal article" date="2001" name="Mol. Phylogenet. Evol.">
        <title>Molecular systematics of bats of the genus Myotis (Vespertilionidae) suggests deterministic ecomorphological convergences.</title>
        <authorList>
            <person name="Ruedi M."/>
            <person name="Mayer F."/>
        </authorList>
    </citation>
    <scope>NUCLEOTIDE SEQUENCE [GENOMIC DNA]</scope>
    <source>
        <strain>Isolate IZEA 3390</strain>
    </source>
</reference>
<geneLocation type="mitochondrion"/>
<proteinExistence type="inferred from homology"/>
<comment type="function">
    <text evidence="2">Component of the ubiquinol-cytochrome c reductase complex (complex III or cytochrome b-c1 complex) that is part of the mitochondrial respiratory chain. The b-c1 complex mediates electron transfer from ubiquinol to cytochrome c. Contributes to the generation of a proton gradient across the mitochondrial membrane that is then used for ATP synthesis.</text>
</comment>
<comment type="cofactor">
    <cofactor evidence="2">
        <name>heme b</name>
        <dbReference type="ChEBI" id="CHEBI:60344"/>
    </cofactor>
    <text evidence="2">Binds 2 heme b groups non-covalently.</text>
</comment>
<comment type="subunit">
    <text evidence="2">The cytochrome bc1 complex contains 11 subunits: 3 respiratory subunits (MT-CYB, CYC1 and UQCRFS1), 2 core proteins (UQCRC1 and UQCRC2) and 6 low-molecular weight proteins (UQCRH/QCR6, UQCRB/QCR7, UQCRQ/QCR8, UQCR10/QCR9, UQCR11/QCR10 and a cleavage product of UQCRFS1). This cytochrome bc1 complex then forms a dimer.</text>
</comment>
<comment type="subcellular location">
    <subcellularLocation>
        <location evidence="2">Mitochondrion inner membrane</location>
        <topology evidence="2">Multi-pass membrane protein</topology>
    </subcellularLocation>
</comment>
<comment type="miscellaneous">
    <text evidence="1">Heme 1 (or BL or b562) is low-potential and absorbs at about 562 nm, and heme 2 (or BH or b566) is high-potential and absorbs at about 566 nm.</text>
</comment>
<comment type="similarity">
    <text evidence="3 4">Belongs to the cytochrome b family.</text>
</comment>
<comment type="caution">
    <text evidence="2">The full-length protein contains only eight transmembrane helices, not nine as predicted by bioinformatics tools.</text>
</comment>
<gene>
    <name type="primary">MT-CYB</name>
    <name type="synonym">COB</name>
    <name type="synonym">CYTB</name>
    <name type="synonym">MTCYB</name>
</gene>
<dbReference type="EMBL" id="AF376843">
    <property type="protein sequence ID" value="AAK57662.1"/>
    <property type="molecule type" value="Genomic_DNA"/>
</dbReference>
<dbReference type="SMR" id="Q957B9"/>
<dbReference type="GO" id="GO:0005743">
    <property type="term" value="C:mitochondrial inner membrane"/>
    <property type="evidence" value="ECO:0007669"/>
    <property type="project" value="UniProtKB-SubCell"/>
</dbReference>
<dbReference type="GO" id="GO:0045275">
    <property type="term" value="C:respiratory chain complex III"/>
    <property type="evidence" value="ECO:0007669"/>
    <property type="project" value="InterPro"/>
</dbReference>
<dbReference type="GO" id="GO:0046872">
    <property type="term" value="F:metal ion binding"/>
    <property type="evidence" value="ECO:0007669"/>
    <property type="project" value="UniProtKB-KW"/>
</dbReference>
<dbReference type="GO" id="GO:0008121">
    <property type="term" value="F:ubiquinol-cytochrome-c reductase activity"/>
    <property type="evidence" value="ECO:0007669"/>
    <property type="project" value="InterPro"/>
</dbReference>
<dbReference type="GO" id="GO:0006122">
    <property type="term" value="P:mitochondrial electron transport, ubiquinol to cytochrome c"/>
    <property type="evidence" value="ECO:0007669"/>
    <property type="project" value="TreeGrafter"/>
</dbReference>
<dbReference type="CDD" id="cd00290">
    <property type="entry name" value="cytochrome_b_C"/>
    <property type="match status" value="1"/>
</dbReference>
<dbReference type="CDD" id="cd00284">
    <property type="entry name" value="Cytochrome_b_N"/>
    <property type="match status" value="1"/>
</dbReference>
<dbReference type="FunFam" id="1.20.810.10:FF:000002">
    <property type="entry name" value="Cytochrome b"/>
    <property type="match status" value="1"/>
</dbReference>
<dbReference type="Gene3D" id="1.20.810.10">
    <property type="entry name" value="Cytochrome Bc1 Complex, Chain C"/>
    <property type="match status" value="1"/>
</dbReference>
<dbReference type="InterPro" id="IPR005798">
    <property type="entry name" value="Cyt_b/b6_C"/>
</dbReference>
<dbReference type="InterPro" id="IPR036150">
    <property type="entry name" value="Cyt_b/b6_C_sf"/>
</dbReference>
<dbReference type="InterPro" id="IPR005797">
    <property type="entry name" value="Cyt_b/b6_N"/>
</dbReference>
<dbReference type="InterPro" id="IPR027387">
    <property type="entry name" value="Cytb/b6-like_sf"/>
</dbReference>
<dbReference type="InterPro" id="IPR030689">
    <property type="entry name" value="Cytochrome_b"/>
</dbReference>
<dbReference type="InterPro" id="IPR048260">
    <property type="entry name" value="Cytochrome_b_C_euk/bac"/>
</dbReference>
<dbReference type="InterPro" id="IPR048259">
    <property type="entry name" value="Cytochrome_b_N_euk/bac"/>
</dbReference>
<dbReference type="InterPro" id="IPR016174">
    <property type="entry name" value="Di-haem_cyt_TM"/>
</dbReference>
<dbReference type="PANTHER" id="PTHR19271">
    <property type="entry name" value="CYTOCHROME B"/>
    <property type="match status" value="1"/>
</dbReference>
<dbReference type="PANTHER" id="PTHR19271:SF16">
    <property type="entry name" value="CYTOCHROME B"/>
    <property type="match status" value="1"/>
</dbReference>
<dbReference type="Pfam" id="PF00032">
    <property type="entry name" value="Cytochrom_B_C"/>
    <property type="match status" value="1"/>
</dbReference>
<dbReference type="Pfam" id="PF00033">
    <property type="entry name" value="Cytochrome_B"/>
    <property type="match status" value="1"/>
</dbReference>
<dbReference type="PIRSF" id="PIRSF038885">
    <property type="entry name" value="COB"/>
    <property type="match status" value="1"/>
</dbReference>
<dbReference type="SUPFAM" id="SSF81648">
    <property type="entry name" value="a domain/subunit of cytochrome bc1 complex (Ubiquinol-cytochrome c reductase)"/>
    <property type="match status" value="1"/>
</dbReference>
<dbReference type="SUPFAM" id="SSF81342">
    <property type="entry name" value="Transmembrane di-heme cytochromes"/>
    <property type="match status" value="1"/>
</dbReference>
<dbReference type="PROSITE" id="PS51003">
    <property type="entry name" value="CYTB_CTER"/>
    <property type="match status" value="1"/>
</dbReference>
<dbReference type="PROSITE" id="PS51002">
    <property type="entry name" value="CYTB_NTER"/>
    <property type="match status" value="1"/>
</dbReference>
<accession>Q957B9</accession>
<organism>
    <name type="scientific">Myotis bechsteinii</name>
    <name type="common">Bechstein's bat</name>
    <dbReference type="NCBI Taxonomy" id="59462"/>
    <lineage>
        <taxon>Eukaryota</taxon>
        <taxon>Metazoa</taxon>
        <taxon>Chordata</taxon>
        <taxon>Craniata</taxon>
        <taxon>Vertebrata</taxon>
        <taxon>Euteleostomi</taxon>
        <taxon>Mammalia</taxon>
        <taxon>Eutheria</taxon>
        <taxon>Laurasiatheria</taxon>
        <taxon>Chiroptera</taxon>
        <taxon>Yangochiroptera</taxon>
        <taxon>Vespertilionidae</taxon>
        <taxon>Myotis</taxon>
    </lineage>
</organism>
<sequence length="379" mass="42803">MTNIRKSHPLMKIINNSFIDLPTPSNISSWWNFGSLLGICLTLQITTGLFLAMHYTSDTATAFNSVTHICRDVNYGWILRYLHANGASMFFICLYLHVGRGLYYGSYMYTETWNIGVILLFTVMATAFMGYVLPWGQMSFWGATVITNLLSAIPYIGTDLVEWIWGGFSVDKATLTRFFAFHFLLPFIITAMVMVHLLFLHETGSNNPMGIPSNADMIPFHPYYTIKDILGLLAMITTLLTLVLFSPDMLGDPDNYTPANPLSTPPHIKPEWYFLFAYAILRSIPNKLGGVLALILSILILIIIPLLHTSKQRSMAFRPLSQCLYWLLVADLLTLTWIGGQPVEYPFVIIGQLASILYLSIIILLMPLTSLVENHLLKW</sequence>